<protein>
    <recommendedName>
        <fullName>Putative uncharacterized protein DDB_G0288537</fullName>
    </recommendedName>
</protein>
<reference key="1">
    <citation type="journal article" date="2005" name="Nature">
        <title>The genome of the social amoeba Dictyostelium discoideum.</title>
        <authorList>
            <person name="Eichinger L."/>
            <person name="Pachebat J.A."/>
            <person name="Gloeckner G."/>
            <person name="Rajandream M.A."/>
            <person name="Sucgang R."/>
            <person name="Berriman M."/>
            <person name="Song J."/>
            <person name="Olsen R."/>
            <person name="Szafranski K."/>
            <person name="Xu Q."/>
            <person name="Tunggal B."/>
            <person name="Kummerfeld S."/>
            <person name="Madera M."/>
            <person name="Konfortov B.A."/>
            <person name="Rivero F."/>
            <person name="Bankier A.T."/>
            <person name="Lehmann R."/>
            <person name="Hamlin N."/>
            <person name="Davies R."/>
            <person name="Gaudet P."/>
            <person name="Fey P."/>
            <person name="Pilcher K."/>
            <person name="Chen G."/>
            <person name="Saunders D."/>
            <person name="Sodergren E.J."/>
            <person name="Davis P."/>
            <person name="Kerhornou A."/>
            <person name="Nie X."/>
            <person name="Hall N."/>
            <person name="Anjard C."/>
            <person name="Hemphill L."/>
            <person name="Bason N."/>
            <person name="Farbrother P."/>
            <person name="Desany B."/>
            <person name="Just E."/>
            <person name="Morio T."/>
            <person name="Rost R."/>
            <person name="Churcher C.M."/>
            <person name="Cooper J."/>
            <person name="Haydock S."/>
            <person name="van Driessche N."/>
            <person name="Cronin A."/>
            <person name="Goodhead I."/>
            <person name="Muzny D.M."/>
            <person name="Mourier T."/>
            <person name="Pain A."/>
            <person name="Lu M."/>
            <person name="Harper D."/>
            <person name="Lindsay R."/>
            <person name="Hauser H."/>
            <person name="James K.D."/>
            <person name="Quiles M."/>
            <person name="Madan Babu M."/>
            <person name="Saito T."/>
            <person name="Buchrieser C."/>
            <person name="Wardroper A."/>
            <person name="Felder M."/>
            <person name="Thangavelu M."/>
            <person name="Johnson D."/>
            <person name="Knights A."/>
            <person name="Loulseged H."/>
            <person name="Mungall K.L."/>
            <person name="Oliver K."/>
            <person name="Price C."/>
            <person name="Quail M.A."/>
            <person name="Urushihara H."/>
            <person name="Hernandez J."/>
            <person name="Rabbinowitsch E."/>
            <person name="Steffen D."/>
            <person name="Sanders M."/>
            <person name="Ma J."/>
            <person name="Kohara Y."/>
            <person name="Sharp S."/>
            <person name="Simmonds M.N."/>
            <person name="Spiegler S."/>
            <person name="Tivey A."/>
            <person name="Sugano S."/>
            <person name="White B."/>
            <person name="Walker D."/>
            <person name="Woodward J.R."/>
            <person name="Winckler T."/>
            <person name="Tanaka Y."/>
            <person name="Shaulsky G."/>
            <person name="Schleicher M."/>
            <person name="Weinstock G.M."/>
            <person name="Rosenthal A."/>
            <person name="Cox E.C."/>
            <person name="Chisholm R.L."/>
            <person name="Gibbs R.A."/>
            <person name="Loomis W.F."/>
            <person name="Platzer M."/>
            <person name="Kay R.R."/>
            <person name="Williams J.G."/>
            <person name="Dear P.H."/>
            <person name="Noegel A.A."/>
            <person name="Barrell B.G."/>
            <person name="Kuspa A."/>
        </authorList>
    </citation>
    <scope>NUCLEOTIDE SEQUENCE [LARGE SCALE GENOMIC DNA]</scope>
    <source>
        <strain>AX4</strain>
    </source>
</reference>
<keyword id="KW-1185">Reference proteome</keyword>
<organism>
    <name type="scientific">Dictyostelium discoideum</name>
    <name type="common">Social amoeba</name>
    <dbReference type="NCBI Taxonomy" id="44689"/>
    <lineage>
        <taxon>Eukaryota</taxon>
        <taxon>Amoebozoa</taxon>
        <taxon>Evosea</taxon>
        <taxon>Eumycetozoa</taxon>
        <taxon>Dictyostelia</taxon>
        <taxon>Dictyosteliales</taxon>
        <taxon>Dictyosteliaceae</taxon>
        <taxon>Dictyostelium</taxon>
    </lineage>
</organism>
<proteinExistence type="predicted"/>
<evidence type="ECO:0000256" key="1">
    <source>
        <dbReference type="SAM" id="MobiDB-lite"/>
    </source>
</evidence>
<name>Y7983_DICDI</name>
<gene>
    <name type="ORF">DDB_G0288537</name>
</gene>
<feature type="chain" id="PRO_0000346985" description="Putative uncharacterized protein DDB_G0288537">
    <location>
        <begin position="1"/>
        <end position="846"/>
    </location>
</feature>
<feature type="region of interest" description="Disordered" evidence="1">
    <location>
        <begin position="159"/>
        <end position="217"/>
    </location>
</feature>
<feature type="region of interest" description="Disordered" evidence="1">
    <location>
        <begin position="254"/>
        <end position="276"/>
    </location>
</feature>
<feature type="region of interest" description="Disordered" evidence="1">
    <location>
        <begin position="332"/>
        <end position="414"/>
    </location>
</feature>
<feature type="region of interest" description="Disordered" evidence="1">
    <location>
        <begin position="459"/>
        <end position="501"/>
    </location>
</feature>
<feature type="region of interest" description="Disordered" evidence="1">
    <location>
        <begin position="556"/>
        <end position="651"/>
    </location>
</feature>
<feature type="region of interest" description="Disordered" evidence="1">
    <location>
        <begin position="803"/>
        <end position="846"/>
    </location>
</feature>
<feature type="compositionally biased region" description="Low complexity" evidence="1">
    <location>
        <begin position="163"/>
        <end position="217"/>
    </location>
</feature>
<feature type="compositionally biased region" description="Low complexity" evidence="1">
    <location>
        <begin position="355"/>
        <end position="414"/>
    </location>
</feature>
<feature type="compositionally biased region" description="Polar residues" evidence="1">
    <location>
        <begin position="459"/>
        <end position="482"/>
    </location>
</feature>
<feature type="compositionally biased region" description="Low complexity" evidence="1">
    <location>
        <begin position="483"/>
        <end position="501"/>
    </location>
</feature>
<feature type="compositionally biased region" description="Low complexity" evidence="1">
    <location>
        <begin position="568"/>
        <end position="642"/>
    </location>
</feature>
<feature type="compositionally biased region" description="Low complexity" evidence="1">
    <location>
        <begin position="811"/>
        <end position="846"/>
    </location>
</feature>
<sequence length="846" mass="95174">MMKHPFSNNHIINGNNNNNNLINGKVGIFWNLFETPLPIQQYSISHILNQLKFYANSLGYIKQFTIISDISNAGNSVTPSTYNIIKQEISQFGGIQYFEIFQSDRSELVSKIWEFIFDNYHEVSNGLHIILVDRFANDSPIIKPLTMRGIKISTLVSPVPTFHNQNQNNNNQNNNQNNNNNNNNNNNNNNNNNNNNNNNSQNNNNNQNNNNNHINHINQNINNVSNETHSFFSENINYSLNPYSDDLSYNGNGCNLNGNNNNNNNNNNNNNNSNSNSNIVIVTQMSSPILSHHNQNNQNNLSGLHFNSLSSYGNNSNPINNGQQSQIHHNINKLNLNNPPPPSNPLTSGLSYSPLQSPNSQSLANSSANISSNALNQSSSSQQQQPQSTSQQQQQQHKMNSSSGNISPPLPLSISLGLCRGGSSNISPLPSPSLSSSSSGSALSPATLTLIMPSTFQSGSSITPKNLSPLSSSAPNTPKQFASLSSSSSPSSSTSSSSNSLLNNGVLSHSLSSLLSLSQPPTQQQQIQQLHIQQLQQQQQQQQQQQQQQQQQQQQQQQQQQQHHHHQQQQQQSPPQNQKNNQQNQNQNQNQNQNQNQNQNQNQNQNQNQNQNQNQNQNQNQNQNQNQNQNQQNQHQQNQPNNIKFPSNFNDNTTLQNLYTVIQGLKEDGFKPTFKVILPRLGAMMGMRVHRSHFEKILEKAKTHSFNIDYTTKTIYYKDDNFGGADPHKAEKCHFTEEEIQELVDLIETTQIKVFPSRYNMVMWVTSQNLPLISKLKQGQIVELCQITINENIVSLDENLKKTTTTTEPQNNNNNNNNNNNNNNNNNNNNNNNNNNNNNNNNNKNK</sequence>
<accession>Q54IT1</accession>
<dbReference type="EMBL" id="AAFI02000115">
    <property type="protein sequence ID" value="EAL63174.1"/>
    <property type="molecule type" value="Genomic_DNA"/>
</dbReference>
<dbReference type="RefSeq" id="XP_636679.1">
    <property type="nucleotide sequence ID" value="XM_631587.1"/>
</dbReference>
<dbReference type="FunCoup" id="Q54IT1">
    <property type="interactions" value="435"/>
</dbReference>
<dbReference type="GlyGen" id="Q54IT1">
    <property type="glycosylation" value="1 site"/>
</dbReference>
<dbReference type="PaxDb" id="44689-DDB0187983"/>
<dbReference type="EnsemblProtists" id="EAL63174">
    <property type="protein sequence ID" value="EAL63174"/>
    <property type="gene ID" value="DDB_G0288537"/>
</dbReference>
<dbReference type="GeneID" id="8626679"/>
<dbReference type="KEGG" id="ddi:DDB_G0288537"/>
<dbReference type="dictyBase" id="DDB_G0288537"/>
<dbReference type="VEuPathDB" id="AmoebaDB:DDB_G0288537"/>
<dbReference type="eggNOG" id="ENOG502RCUG">
    <property type="taxonomic scope" value="Eukaryota"/>
</dbReference>
<dbReference type="HOGENOM" id="CLU_336925_0_0_1"/>
<dbReference type="InParanoid" id="Q54IT1"/>
<dbReference type="OMA" id="HRSHFEK"/>
<dbReference type="PRO" id="PR:Q54IT1"/>
<dbReference type="Proteomes" id="UP000002195">
    <property type="component" value="Chromosome 5"/>
</dbReference>
<dbReference type="InterPro" id="IPR039301">
    <property type="entry name" value="Sip5/DA2"/>
</dbReference>
<dbReference type="PANTHER" id="PTHR31315">
    <property type="entry name" value="PROTEIN SIP5"/>
    <property type="match status" value="1"/>
</dbReference>
<dbReference type="PANTHER" id="PTHR31315:SF1">
    <property type="entry name" value="PROTEIN SIP5"/>
    <property type="match status" value="1"/>
</dbReference>